<evidence type="ECO:0000255" key="1">
    <source>
        <dbReference type="HAMAP-Rule" id="MF_01580"/>
    </source>
</evidence>
<evidence type="ECO:0000305" key="2"/>
<comment type="function">
    <text evidence="1">Activates the cell division inhibited by chromosomal DNA over-replication.</text>
</comment>
<comment type="similarity">
    <text evidence="1">Belongs to the CedA family.</text>
</comment>
<comment type="sequence caution" evidence="2">
    <conflict type="erroneous initiation">
        <sequence resource="EMBL-CDS" id="AAN80588"/>
    </conflict>
</comment>
<protein>
    <recommendedName>
        <fullName evidence="1">Cell division activator CedA</fullName>
    </recommendedName>
</protein>
<sequence length="80" mass="9462">MKKPLRQQNRQIISYVPRTEPAPPEHAIKMDSFRDVWMLRGKYVAFVLMGESFLRSPAFTVPESAQRWANQIRQENEVEE</sequence>
<accession>Q8FH13</accession>
<organism>
    <name type="scientific">Escherichia coli O6:H1 (strain CFT073 / ATCC 700928 / UPEC)</name>
    <dbReference type="NCBI Taxonomy" id="199310"/>
    <lineage>
        <taxon>Bacteria</taxon>
        <taxon>Pseudomonadati</taxon>
        <taxon>Pseudomonadota</taxon>
        <taxon>Gammaproteobacteria</taxon>
        <taxon>Enterobacterales</taxon>
        <taxon>Enterobacteriaceae</taxon>
        <taxon>Escherichia</taxon>
    </lineage>
</organism>
<gene>
    <name evidence="1" type="primary">cedA</name>
    <name type="ordered locus">c2129</name>
</gene>
<reference key="1">
    <citation type="journal article" date="2002" name="Proc. Natl. Acad. Sci. U.S.A.">
        <title>Extensive mosaic structure revealed by the complete genome sequence of uropathogenic Escherichia coli.</title>
        <authorList>
            <person name="Welch R.A."/>
            <person name="Burland V."/>
            <person name="Plunkett G. III"/>
            <person name="Redford P."/>
            <person name="Roesch P."/>
            <person name="Rasko D."/>
            <person name="Buckles E.L."/>
            <person name="Liou S.-R."/>
            <person name="Boutin A."/>
            <person name="Hackett J."/>
            <person name="Stroud D."/>
            <person name="Mayhew G.F."/>
            <person name="Rose D.J."/>
            <person name="Zhou S."/>
            <person name="Schwartz D.C."/>
            <person name="Perna N.T."/>
            <person name="Mobley H.L.T."/>
            <person name="Donnenberg M.S."/>
            <person name="Blattner F.R."/>
        </authorList>
    </citation>
    <scope>NUCLEOTIDE SEQUENCE [LARGE SCALE GENOMIC DNA]</scope>
    <source>
        <strain>CFT073 / ATCC 700928 / UPEC</strain>
    </source>
</reference>
<proteinExistence type="inferred from homology"/>
<keyword id="KW-0131">Cell cycle</keyword>
<keyword id="KW-0132">Cell division</keyword>
<keyword id="KW-0238">DNA-binding</keyword>
<keyword id="KW-1185">Reference proteome</keyword>
<name>CEDA_ECOL6</name>
<dbReference type="EMBL" id="AE014075">
    <property type="protein sequence ID" value="AAN80588.1"/>
    <property type="status" value="ALT_INIT"/>
    <property type="molecule type" value="Genomic_DNA"/>
</dbReference>
<dbReference type="SMR" id="Q8FH13"/>
<dbReference type="STRING" id="199310.c2129"/>
<dbReference type="KEGG" id="ecc:c2129"/>
<dbReference type="eggNOG" id="ENOG5032S26">
    <property type="taxonomic scope" value="Bacteria"/>
</dbReference>
<dbReference type="HOGENOM" id="CLU_167445_0_0_6"/>
<dbReference type="Proteomes" id="UP000001410">
    <property type="component" value="Chromosome"/>
</dbReference>
<dbReference type="GO" id="GO:0003677">
    <property type="term" value="F:DNA binding"/>
    <property type="evidence" value="ECO:0007669"/>
    <property type="project" value="UniProtKB-UniRule"/>
</dbReference>
<dbReference type="GO" id="GO:0051301">
    <property type="term" value="P:cell division"/>
    <property type="evidence" value="ECO:0007669"/>
    <property type="project" value="UniProtKB-UniRule"/>
</dbReference>
<dbReference type="Gene3D" id="3.30.730.20">
    <property type="entry name" value="Cell division activator CedA"/>
    <property type="match status" value="1"/>
</dbReference>
<dbReference type="HAMAP" id="MF_01580">
    <property type="entry name" value="CedA"/>
    <property type="match status" value="1"/>
</dbReference>
<dbReference type="InterPro" id="IPR038463">
    <property type="entry name" value="CedA-like_sf"/>
</dbReference>
<dbReference type="InterPro" id="IPR019666">
    <property type="entry name" value="Cell_div_activator_CedA"/>
</dbReference>
<dbReference type="NCBIfam" id="NF007510">
    <property type="entry name" value="PRK10113.1"/>
    <property type="match status" value="1"/>
</dbReference>
<dbReference type="Pfam" id="PF10729">
    <property type="entry name" value="CedA"/>
    <property type="match status" value="1"/>
</dbReference>
<feature type="chain" id="PRO_0000300211" description="Cell division activator CedA">
    <location>
        <begin position="1"/>
        <end position="80"/>
    </location>
</feature>